<reference key="1">
    <citation type="journal article" date="2004" name="Nature">
        <title>Genome evolution in yeasts.</title>
        <authorList>
            <person name="Dujon B."/>
            <person name="Sherman D."/>
            <person name="Fischer G."/>
            <person name="Durrens P."/>
            <person name="Casaregola S."/>
            <person name="Lafontaine I."/>
            <person name="de Montigny J."/>
            <person name="Marck C."/>
            <person name="Neuveglise C."/>
            <person name="Talla E."/>
            <person name="Goffard N."/>
            <person name="Frangeul L."/>
            <person name="Aigle M."/>
            <person name="Anthouard V."/>
            <person name="Babour A."/>
            <person name="Barbe V."/>
            <person name="Barnay S."/>
            <person name="Blanchin S."/>
            <person name="Beckerich J.-M."/>
            <person name="Beyne E."/>
            <person name="Bleykasten C."/>
            <person name="Boisrame A."/>
            <person name="Boyer J."/>
            <person name="Cattolico L."/>
            <person name="Confanioleri F."/>
            <person name="de Daruvar A."/>
            <person name="Despons L."/>
            <person name="Fabre E."/>
            <person name="Fairhead C."/>
            <person name="Ferry-Dumazet H."/>
            <person name="Groppi A."/>
            <person name="Hantraye F."/>
            <person name="Hennequin C."/>
            <person name="Jauniaux N."/>
            <person name="Joyet P."/>
            <person name="Kachouri R."/>
            <person name="Kerrest A."/>
            <person name="Koszul R."/>
            <person name="Lemaire M."/>
            <person name="Lesur I."/>
            <person name="Ma L."/>
            <person name="Muller H."/>
            <person name="Nicaud J.-M."/>
            <person name="Nikolski M."/>
            <person name="Oztas S."/>
            <person name="Ozier-Kalogeropoulos O."/>
            <person name="Pellenz S."/>
            <person name="Potier S."/>
            <person name="Richard G.-F."/>
            <person name="Straub M.-L."/>
            <person name="Suleau A."/>
            <person name="Swennen D."/>
            <person name="Tekaia F."/>
            <person name="Wesolowski-Louvel M."/>
            <person name="Westhof E."/>
            <person name="Wirth B."/>
            <person name="Zeniou-Meyer M."/>
            <person name="Zivanovic Y."/>
            <person name="Bolotin-Fukuhara M."/>
            <person name="Thierry A."/>
            <person name="Bouchier C."/>
            <person name="Caudron B."/>
            <person name="Scarpelli C."/>
            <person name="Gaillardin C."/>
            <person name="Weissenbach J."/>
            <person name="Wincker P."/>
            <person name="Souciet J.-L."/>
        </authorList>
    </citation>
    <scope>NUCLEOTIDE SEQUENCE [LARGE SCALE GENOMIC DNA]</scope>
    <source>
        <strain>CLIB 122 / E 150</strain>
    </source>
</reference>
<organism>
    <name type="scientific">Yarrowia lipolytica (strain CLIB 122 / E 150)</name>
    <name type="common">Yeast</name>
    <name type="synonym">Candida lipolytica</name>
    <dbReference type="NCBI Taxonomy" id="284591"/>
    <lineage>
        <taxon>Eukaryota</taxon>
        <taxon>Fungi</taxon>
        <taxon>Dikarya</taxon>
        <taxon>Ascomycota</taxon>
        <taxon>Saccharomycotina</taxon>
        <taxon>Dipodascomycetes</taxon>
        <taxon>Dipodascales</taxon>
        <taxon>Dipodascales incertae sedis</taxon>
        <taxon>Yarrowia</taxon>
    </lineage>
</organism>
<feature type="chain" id="PRO_0000191770" description="Glycosylphosphatidylinositol anchor biosynthesis protein 11">
    <location>
        <begin position="1"/>
        <end position="223"/>
    </location>
</feature>
<feature type="transmembrane region" description="Helical" evidence="2">
    <location>
        <begin position="25"/>
        <end position="45"/>
    </location>
</feature>
<feature type="transmembrane region" description="Helical" evidence="2">
    <location>
        <begin position="52"/>
        <end position="72"/>
    </location>
</feature>
<feature type="transmembrane region" description="Helical" evidence="2">
    <location>
        <begin position="88"/>
        <end position="108"/>
    </location>
</feature>
<feature type="transmembrane region" description="Helical" evidence="2">
    <location>
        <begin position="120"/>
        <end position="140"/>
    </location>
</feature>
<feature type="transmembrane region" description="Helical" evidence="2">
    <location>
        <begin position="158"/>
        <end position="178"/>
    </location>
</feature>
<feature type="transmembrane region" description="Helical" evidence="2">
    <location>
        <begin position="189"/>
        <end position="209"/>
    </location>
</feature>
<proteinExistence type="inferred from homology"/>
<keyword id="KW-0256">Endoplasmic reticulum</keyword>
<keyword id="KW-0337">GPI-anchor biosynthesis</keyword>
<keyword id="KW-0472">Membrane</keyword>
<keyword id="KW-1185">Reference proteome</keyword>
<keyword id="KW-0812">Transmembrane</keyword>
<keyword id="KW-1133">Transmembrane helix</keyword>
<protein>
    <recommendedName>
        <fullName>Glycosylphosphatidylinositol anchor biosynthesis protein 11</fullName>
    </recommendedName>
</protein>
<dbReference type="EMBL" id="CR382131">
    <property type="protein sequence ID" value="CAG79100.1"/>
    <property type="molecule type" value="Genomic_DNA"/>
</dbReference>
<dbReference type="RefSeq" id="XP_503521.1">
    <property type="nucleotide sequence ID" value="XM_503521.1"/>
</dbReference>
<dbReference type="FunCoup" id="Q6C741">
    <property type="interactions" value="159"/>
</dbReference>
<dbReference type="STRING" id="284591.Q6C741"/>
<dbReference type="EnsemblFungi" id="CAG79100">
    <property type="protein sequence ID" value="CAG79100"/>
    <property type="gene ID" value="YALI0_E03960g"/>
</dbReference>
<dbReference type="KEGG" id="yli:2912173"/>
<dbReference type="VEuPathDB" id="FungiDB:YALI0_E03960g"/>
<dbReference type="HOGENOM" id="CLU_069429_2_0_1"/>
<dbReference type="InParanoid" id="Q6C741"/>
<dbReference type="OMA" id="WQRWPVT"/>
<dbReference type="OrthoDB" id="94935at4891"/>
<dbReference type="UniPathway" id="UPA00196"/>
<dbReference type="Proteomes" id="UP000001300">
    <property type="component" value="Chromosome E"/>
</dbReference>
<dbReference type="GO" id="GO:0005789">
    <property type="term" value="C:endoplasmic reticulum membrane"/>
    <property type="evidence" value="ECO:0007669"/>
    <property type="project" value="UniProtKB-SubCell"/>
</dbReference>
<dbReference type="GO" id="GO:0051377">
    <property type="term" value="F:mannose-ethanolamine phosphotransferase activity"/>
    <property type="evidence" value="ECO:0000318"/>
    <property type="project" value="GO_Central"/>
</dbReference>
<dbReference type="GO" id="GO:0006506">
    <property type="term" value="P:GPI anchor biosynthetic process"/>
    <property type="evidence" value="ECO:0000318"/>
    <property type="project" value="GO_Central"/>
</dbReference>
<dbReference type="InterPro" id="IPR009580">
    <property type="entry name" value="GPI_biosynthesis_protein_Pig-F"/>
</dbReference>
<dbReference type="Pfam" id="PF06699">
    <property type="entry name" value="PIG-F"/>
    <property type="match status" value="1"/>
</dbReference>
<sequence length="223" mass="24057">MATRKAAKTKANGPAHVPSGPSQVLAVVYGTLLLVYLRFIFSAGITHDPAKVMTQALPGLLLLHMGYCVVVLGNKPGRKIGTDVSTAMIAAALSVFFSVIIFGLLVLFGAPAISLVHNTFVCAMHMSILAVLPLFFTYHLDSKVWADIIAMRRPLDHVYAASVCTLIGAWLGAIPIPYDWDRPWQQWPITILAGAYLGYFVGTLGGIALELTKSLCSKTKKTE</sequence>
<evidence type="ECO:0000250" key="1"/>
<evidence type="ECO:0000255" key="2"/>
<evidence type="ECO:0000305" key="3"/>
<accession>Q6C741</accession>
<comment type="function">
    <text evidence="1">Acts in the GPI biosynthetic pathway between GlcNAc-PI synthesis and GPI transfer to protein.</text>
</comment>
<comment type="pathway">
    <text>Glycolipid biosynthesis; glycosylphosphatidylinositol-anchor biosynthesis.</text>
</comment>
<comment type="subcellular location">
    <subcellularLocation>
        <location evidence="1">Endoplasmic reticulum membrane</location>
        <topology evidence="1">Multi-pass membrane protein</topology>
    </subcellularLocation>
</comment>
<comment type="similarity">
    <text evidence="3">Belongs to the PIGF family.</text>
</comment>
<gene>
    <name type="primary">GPI11</name>
    <name type="ordered locus">YALI0E03960g</name>
</gene>
<name>GPI11_YARLI</name>